<evidence type="ECO:0000250" key="1">
    <source>
        <dbReference type="UniProtKB" id="P35268"/>
    </source>
</evidence>
<evidence type="ECO:0000305" key="2"/>
<protein>
    <recommendedName>
        <fullName evidence="2">Large ribosomal subunit protein eL22</fullName>
    </recommendedName>
    <alternativeName>
        <fullName>60S ribosomal protein L22</fullName>
    </alternativeName>
</protein>
<accession>P52865</accession>
<gene>
    <name type="primary">rpl22</name>
</gene>
<proteinExistence type="evidence at transcript level"/>
<sequence length="125" mass="14521">MAPVKKQGGKKKKQILKFTLDCTHPVEDGIMDAANFEQFLQERIKVNGKSGNLGNGVVSIERXXSKISVNSEVPFSKRYLKYLTKKYLKKNNLRDWLRVVANTKESYELRYFQINQDEEEIHMTS</sequence>
<dbReference type="EMBL" id="U49123">
    <property type="protein sequence ID" value="AAA91235.1"/>
    <property type="molecule type" value="mRNA"/>
</dbReference>
<dbReference type="STRING" id="8049.ENSGMOP00000021191"/>
<dbReference type="Proteomes" id="UP000694546">
    <property type="component" value="Unplaced"/>
</dbReference>
<dbReference type="GO" id="GO:0005737">
    <property type="term" value="C:cytoplasm"/>
    <property type="evidence" value="ECO:0007669"/>
    <property type="project" value="UniProtKB-SubCell"/>
</dbReference>
<dbReference type="GO" id="GO:1990904">
    <property type="term" value="C:ribonucleoprotein complex"/>
    <property type="evidence" value="ECO:0007669"/>
    <property type="project" value="UniProtKB-KW"/>
</dbReference>
<dbReference type="GO" id="GO:0005840">
    <property type="term" value="C:ribosome"/>
    <property type="evidence" value="ECO:0007669"/>
    <property type="project" value="UniProtKB-KW"/>
</dbReference>
<dbReference type="GO" id="GO:0003723">
    <property type="term" value="F:RNA binding"/>
    <property type="evidence" value="ECO:0007669"/>
    <property type="project" value="TreeGrafter"/>
</dbReference>
<dbReference type="GO" id="GO:0003735">
    <property type="term" value="F:structural constituent of ribosome"/>
    <property type="evidence" value="ECO:0007669"/>
    <property type="project" value="InterPro"/>
</dbReference>
<dbReference type="GO" id="GO:0002181">
    <property type="term" value="P:cytoplasmic translation"/>
    <property type="evidence" value="ECO:0007669"/>
    <property type="project" value="TreeGrafter"/>
</dbReference>
<dbReference type="FunFam" id="3.30.1360.210:FF:000001">
    <property type="entry name" value="60S ribosomal protein L22 1"/>
    <property type="match status" value="1"/>
</dbReference>
<dbReference type="Gene3D" id="3.30.1360.210">
    <property type="match status" value="1"/>
</dbReference>
<dbReference type="InterPro" id="IPR002671">
    <property type="entry name" value="Ribosomal_eL22"/>
</dbReference>
<dbReference type="InterPro" id="IPR038526">
    <property type="entry name" value="Ribosomal_eL22_sf"/>
</dbReference>
<dbReference type="PANTHER" id="PTHR10064">
    <property type="entry name" value="60S RIBOSOMAL PROTEIN L22"/>
    <property type="match status" value="1"/>
</dbReference>
<dbReference type="PANTHER" id="PTHR10064:SF2">
    <property type="entry name" value="LARGE RIBOSOMAL SUBUNIT PROTEIN EL22"/>
    <property type="match status" value="1"/>
</dbReference>
<dbReference type="Pfam" id="PF01776">
    <property type="entry name" value="Ribosomal_L22e"/>
    <property type="match status" value="1"/>
</dbReference>
<reference key="1">
    <citation type="submission" date="1996-02" db="EMBL/GenBank/DDBJ databases">
        <authorList>
            <person name="Ong T.L."/>
            <person name="McNamara P.T."/>
            <person name="Armstrong R.F."/>
            <person name="Buckley L.J."/>
        </authorList>
    </citation>
    <scope>NUCLEOTIDE SEQUENCE [MRNA]</scope>
</reference>
<comment type="function">
    <text evidence="1">Component of the large ribosomal subunit. The ribosome is a large ribonucleoprotein complex responsible for the synthesis of proteins in the cell.</text>
</comment>
<comment type="subunit">
    <text evidence="1">Component of the large ribosomal subunit.</text>
</comment>
<comment type="subcellular location">
    <subcellularLocation>
        <location evidence="1">Cytoplasm</location>
    </subcellularLocation>
</comment>
<comment type="similarity">
    <text evidence="2">Belongs to the eukaryotic ribosomal protein eL22 family.</text>
</comment>
<keyword id="KW-0963">Cytoplasm</keyword>
<keyword id="KW-1185">Reference proteome</keyword>
<keyword id="KW-0687">Ribonucleoprotein</keyword>
<keyword id="KW-0689">Ribosomal protein</keyword>
<name>RL22_GADMO</name>
<organism>
    <name type="scientific">Gadus morhua</name>
    <name type="common">Atlantic cod</name>
    <dbReference type="NCBI Taxonomy" id="8049"/>
    <lineage>
        <taxon>Eukaryota</taxon>
        <taxon>Metazoa</taxon>
        <taxon>Chordata</taxon>
        <taxon>Craniata</taxon>
        <taxon>Vertebrata</taxon>
        <taxon>Euteleostomi</taxon>
        <taxon>Actinopterygii</taxon>
        <taxon>Neopterygii</taxon>
        <taxon>Teleostei</taxon>
        <taxon>Neoteleostei</taxon>
        <taxon>Acanthomorphata</taxon>
        <taxon>Zeiogadaria</taxon>
        <taxon>Gadariae</taxon>
        <taxon>Gadiformes</taxon>
        <taxon>Gadoidei</taxon>
        <taxon>Gadidae</taxon>
        <taxon>Gadus</taxon>
    </lineage>
</organism>
<feature type="chain" id="PRO_0000215507" description="Large ribosomal subunit protein eL22">
    <location>
        <begin position="1"/>
        <end position="125" status="greater than"/>
    </location>
</feature>
<feature type="non-terminal residue">
    <location>
        <position position="125"/>
    </location>
</feature>